<evidence type="ECO:0000255" key="1">
    <source>
        <dbReference type="HAMAP-Rule" id="MF_00518"/>
    </source>
</evidence>
<sequence>MKLLVQRVNEAKVDINGITKSKINDGFLVLLGIHKEDNESDIDYCIRKLINLRIFSDEDDKLNLSIKDLNYEILLVSQFTLYASTRKGNRPSFDKCAKGEFAKNLYDNFIKKLKLENVPFQTGEFGADMKVSLTNDGPVTIIIDSRSE</sequence>
<accession>B0S1I7</accession>
<feature type="chain" id="PRO_1000127534" description="D-aminoacyl-tRNA deacylase">
    <location>
        <begin position="1"/>
        <end position="148"/>
    </location>
</feature>
<feature type="short sequence motif" description="Gly-cisPro motif, important for rejection of L-amino acids" evidence="1">
    <location>
        <begin position="137"/>
        <end position="138"/>
    </location>
</feature>
<keyword id="KW-0963">Cytoplasm</keyword>
<keyword id="KW-0378">Hydrolase</keyword>
<keyword id="KW-1185">Reference proteome</keyword>
<keyword id="KW-0694">RNA-binding</keyword>
<keyword id="KW-0820">tRNA-binding</keyword>
<dbReference type="EC" id="3.1.1.96" evidence="1"/>
<dbReference type="EMBL" id="AP008971">
    <property type="protein sequence ID" value="BAG08227.1"/>
    <property type="molecule type" value="Genomic_DNA"/>
</dbReference>
<dbReference type="RefSeq" id="WP_012290641.1">
    <property type="nucleotide sequence ID" value="NC_010376.1"/>
</dbReference>
<dbReference type="SMR" id="B0S1I7"/>
<dbReference type="STRING" id="334413.FMG_0809"/>
<dbReference type="KEGG" id="fma:FMG_0809"/>
<dbReference type="eggNOG" id="COG1490">
    <property type="taxonomic scope" value="Bacteria"/>
</dbReference>
<dbReference type="HOGENOM" id="CLU_076901_1_0_9"/>
<dbReference type="Proteomes" id="UP000001319">
    <property type="component" value="Chromosome"/>
</dbReference>
<dbReference type="GO" id="GO:0005737">
    <property type="term" value="C:cytoplasm"/>
    <property type="evidence" value="ECO:0007669"/>
    <property type="project" value="UniProtKB-SubCell"/>
</dbReference>
<dbReference type="GO" id="GO:0051500">
    <property type="term" value="F:D-tyrosyl-tRNA(Tyr) deacylase activity"/>
    <property type="evidence" value="ECO:0007669"/>
    <property type="project" value="TreeGrafter"/>
</dbReference>
<dbReference type="GO" id="GO:0106026">
    <property type="term" value="F:Gly-tRNA(Ala) deacylase activity"/>
    <property type="evidence" value="ECO:0007669"/>
    <property type="project" value="UniProtKB-UniRule"/>
</dbReference>
<dbReference type="GO" id="GO:0043908">
    <property type="term" value="F:Ser(Gly)-tRNA(Ala) hydrolase activity"/>
    <property type="evidence" value="ECO:0007669"/>
    <property type="project" value="UniProtKB-UniRule"/>
</dbReference>
<dbReference type="GO" id="GO:0000049">
    <property type="term" value="F:tRNA binding"/>
    <property type="evidence" value="ECO:0007669"/>
    <property type="project" value="UniProtKB-UniRule"/>
</dbReference>
<dbReference type="GO" id="GO:0019478">
    <property type="term" value="P:D-amino acid catabolic process"/>
    <property type="evidence" value="ECO:0007669"/>
    <property type="project" value="UniProtKB-UniRule"/>
</dbReference>
<dbReference type="CDD" id="cd00563">
    <property type="entry name" value="Dtyr_deacylase"/>
    <property type="match status" value="1"/>
</dbReference>
<dbReference type="FunFam" id="3.50.80.10:FF:000001">
    <property type="entry name" value="D-aminoacyl-tRNA deacylase"/>
    <property type="match status" value="1"/>
</dbReference>
<dbReference type="Gene3D" id="3.50.80.10">
    <property type="entry name" value="D-tyrosyl-tRNA(Tyr) deacylase"/>
    <property type="match status" value="1"/>
</dbReference>
<dbReference type="HAMAP" id="MF_00518">
    <property type="entry name" value="Deacylase_Dtd"/>
    <property type="match status" value="1"/>
</dbReference>
<dbReference type="InterPro" id="IPR003732">
    <property type="entry name" value="Daa-tRNA_deacyls_DTD"/>
</dbReference>
<dbReference type="InterPro" id="IPR023509">
    <property type="entry name" value="DTD-like_sf"/>
</dbReference>
<dbReference type="NCBIfam" id="TIGR00256">
    <property type="entry name" value="D-aminoacyl-tRNA deacylase"/>
    <property type="match status" value="1"/>
</dbReference>
<dbReference type="PANTHER" id="PTHR10472:SF5">
    <property type="entry name" value="D-AMINOACYL-TRNA DEACYLASE 1"/>
    <property type="match status" value="1"/>
</dbReference>
<dbReference type="PANTHER" id="PTHR10472">
    <property type="entry name" value="D-TYROSYL-TRNA TYR DEACYLASE"/>
    <property type="match status" value="1"/>
</dbReference>
<dbReference type="Pfam" id="PF02580">
    <property type="entry name" value="Tyr_Deacylase"/>
    <property type="match status" value="1"/>
</dbReference>
<dbReference type="SUPFAM" id="SSF69500">
    <property type="entry name" value="DTD-like"/>
    <property type="match status" value="1"/>
</dbReference>
<proteinExistence type="inferred from homology"/>
<organism>
    <name type="scientific">Finegoldia magna (strain ATCC 29328 / DSM 20472 / WAL 2508)</name>
    <name type="common">Peptostreptococcus magnus</name>
    <dbReference type="NCBI Taxonomy" id="334413"/>
    <lineage>
        <taxon>Bacteria</taxon>
        <taxon>Bacillati</taxon>
        <taxon>Bacillota</taxon>
        <taxon>Tissierellia</taxon>
        <taxon>Tissierellales</taxon>
        <taxon>Peptoniphilaceae</taxon>
        <taxon>Finegoldia</taxon>
    </lineage>
</organism>
<reference key="1">
    <citation type="journal article" date="2008" name="DNA Res.">
        <title>Complete genome sequence of Finegoldia magna, an anaerobic opportunistic pathogen.</title>
        <authorList>
            <person name="Goto T."/>
            <person name="Yamashita A."/>
            <person name="Hirakawa H."/>
            <person name="Matsutani M."/>
            <person name="Todo K."/>
            <person name="Ohshima K."/>
            <person name="Toh H."/>
            <person name="Miyamoto K."/>
            <person name="Kuhara S."/>
            <person name="Hattori M."/>
            <person name="Shimizu T."/>
            <person name="Akimoto S."/>
        </authorList>
    </citation>
    <scope>NUCLEOTIDE SEQUENCE [LARGE SCALE GENOMIC DNA]</scope>
    <source>
        <strain>ATCC 29328 / DSM 20472 / WAL 2508</strain>
    </source>
</reference>
<protein>
    <recommendedName>
        <fullName evidence="1">D-aminoacyl-tRNA deacylase</fullName>
        <shortName evidence="1">DTD</shortName>
        <ecNumber evidence="1">3.1.1.96</ecNumber>
    </recommendedName>
    <alternativeName>
        <fullName evidence="1">Gly-tRNA(Ala) deacylase</fullName>
    </alternativeName>
</protein>
<comment type="function">
    <text evidence="1">An aminoacyl-tRNA editing enzyme that deacylates mischarged D-aminoacyl-tRNAs. Also deacylates mischarged glycyl-tRNA(Ala), protecting cells against glycine mischarging by AlaRS. Acts via tRNA-based rather than protein-based catalysis; rejects L-amino acids rather than detecting D-amino acids in the active site. By recycling D-aminoacyl-tRNA to D-amino acids and free tRNA molecules, this enzyme counteracts the toxicity associated with the formation of D-aminoacyl-tRNA entities in vivo and helps enforce protein L-homochirality.</text>
</comment>
<comment type="catalytic activity">
    <reaction evidence="1">
        <text>glycyl-tRNA(Ala) + H2O = tRNA(Ala) + glycine + H(+)</text>
        <dbReference type="Rhea" id="RHEA:53744"/>
        <dbReference type="Rhea" id="RHEA-COMP:9657"/>
        <dbReference type="Rhea" id="RHEA-COMP:13640"/>
        <dbReference type="ChEBI" id="CHEBI:15377"/>
        <dbReference type="ChEBI" id="CHEBI:15378"/>
        <dbReference type="ChEBI" id="CHEBI:57305"/>
        <dbReference type="ChEBI" id="CHEBI:78442"/>
        <dbReference type="ChEBI" id="CHEBI:78522"/>
        <dbReference type="EC" id="3.1.1.96"/>
    </reaction>
</comment>
<comment type="catalytic activity">
    <reaction evidence="1">
        <text>a D-aminoacyl-tRNA + H2O = a tRNA + a D-alpha-amino acid + H(+)</text>
        <dbReference type="Rhea" id="RHEA:13953"/>
        <dbReference type="Rhea" id="RHEA-COMP:10123"/>
        <dbReference type="Rhea" id="RHEA-COMP:10124"/>
        <dbReference type="ChEBI" id="CHEBI:15377"/>
        <dbReference type="ChEBI" id="CHEBI:15378"/>
        <dbReference type="ChEBI" id="CHEBI:59871"/>
        <dbReference type="ChEBI" id="CHEBI:78442"/>
        <dbReference type="ChEBI" id="CHEBI:79333"/>
        <dbReference type="EC" id="3.1.1.96"/>
    </reaction>
</comment>
<comment type="subunit">
    <text evidence="1">Homodimer.</text>
</comment>
<comment type="subcellular location">
    <subcellularLocation>
        <location evidence="1">Cytoplasm</location>
    </subcellularLocation>
</comment>
<comment type="domain">
    <text evidence="1">A Gly-cisPro motif from one monomer fits into the active site of the other monomer to allow specific chiral rejection of L-amino acids.</text>
</comment>
<comment type="similarity">
    <text evidence="1">Belongs to the DTD family.</text>
</comment>
<name>DTD_FINM2</name>
<gene>
    <name evidence="1" type="primary">dtd</name>
    <name type="ordered locus">FMG_0809</name>
</gene>